<proteinExistence type="inferred from homology"/>
<gene>
    <name evidence="1" type="primary">gpsA2</name>
    <name type="ordered locus">BQ2027_MB3006C</name>
</gene>
<name>GPDA2_MYCBO</name>
<dbReference type="EC" id="1.1.1.94" evidence="1"/>
<dbReference type="EMBL" id="LT708304">
    <property type="protein sequence ID" value="SIU01630.1"/>
    <property type="molecule type" value="Genomic_DNA"/>
</dbReference>
<dbReference type="RefSeq" id="NP_856651.1">
    <property type="nucleotide sequence ID" value="NC_002945.3"/>
</dbReference>
<dbReference type="RefSeq" id="WP_003415091.1">
    <property type="nucleotide sequence ID" value="NC_002945.4"/>
</dbReference>
<dbReference type="SMR" id="P59961"/>
<dbReference type="KEGG" id="mbo:BQ2027_MB3006C"/>
<dbReference type="PATRIC" id="fig|233413.5.peg.3305"/>
<dbReference type="UniPathway" id="UPA00940"/>
<dbReference type="Proteomes" id="UP000001419">
    <property type="component" value="Chromosome"/>
</dbReference>
<dbReference type="GO" id="GO:0005829">
    <property type="term" value="C:cytosol"/>
    <property type="evidence" value="ECO:0007669"/>
    <property type="project" value="TreeGrafter"/>
</dbReference>
<dbReference type="GO" id="GO:0047952">
    <property type="term" value="F:glycerol-3-phosphate dehydrogenase [NAD(P)+] activity"/>
    <property type="evidence" value="ECO:0007669"/>
    <property type="project" value="UniProtKB-UniRule"/>
</dbReference>
<dbReference type="GO" id="GO:0051287">
    <property type="term" value="F:NAD binding"/>
    <property type="evidence" value="ECO:0007669"/>
    <property type="project" value="InterPro"/>
</dbReference>
<dbReference type="GO" id="GO:0005975">
    <property type="term" value="P:carbohydrate metabolic process"/>
    <property type="evidence" value="ECO:0007669"/>
    <property type="project" value="InterPro"/>
</dbReference>
<dbReference type="GO" id="GO:0046167">
    <property type="term" value="P:glycerol-3-phosphate biosynthetic process"/>
    <property type="evidence" value="ECO:0007669"/>
    <property type="project" value="UniProtKB-UniRule"/>
</dbReference>
<dbReference type="GO" id="GO:0046168">
    <property type="term" value="P:glycerol-3-phosphate catabolic process"/>
    <property type="evidence" value="ECO:0007669"/>
    <property type="project" value="InterPro"/>
</dbReference>
<dbReference type="GO" id="GO:0006650">
    <property type="term" value="P:glycerophospholipid metabolic process"/>
    <property type="evidence" value="ECO:0007669"/>
    <property type="project" value="UniProtKB-UniRule"/>
</dbReference>
<dbReference type="GO" id="GO:0008654">
    <property type="term" value="P:phospholipid biosynthetic process"/>
    <property type="evidence" value="ECO:0007669"/>
    <property type="project" value="UniProtKB-KW"/>
</dbReference>
<dbReference type="FunFam" id="1.10.1040.10:FF:000001">
    <property type="entry name" value="Glycerol-3-phosphate dehydrogenase [NAD(P)+]"/>
    <property type="match status" value="1"/>
</dbReference>
<dbReference type="FunFam" id="3.40.50.720:FF:000019">
    <property type="entry name" value="Glycerol-3-phosphate dehydrogenase [NAD(P)+]"/>
    <property type="match status" value="1"/>
</dbReference>
<dbReference type="Gene3D" id="1.10.1040.10">
    <property type="entry name" value="N-(1-d-carboxylethyl)-l-norvaline Dehydrogenase, domain 2"/>
    <property type="match status" value="1"/>
</dbReference>
<dbReference type="Gene3D" id="3.40.50.720">
    <property type="entry name" value="NAD(P)-binding Rossmann-like Domain"/>
    <property type="match status" value="1"/>
</dbReference>
<dbReference type="HAMAP" id="MF_00394">
    <property type="entry name" value="NAD_Glyc3P_dehydrog"/>
    <property type="match status" value="1"/>
</dbReference>
<dbReference type="InterPro" id="IPR008927">
    <property type="entry name" value="6-PGluconate_DH-like_C_sf"/>
</dbReference>
<dbReference type="InterPro" id="IPR013328">
    <property type="entry name" value="6PGD_dom2"/>
</dbReference>
<dbReference type="InterPro" id="IPR006168">
    <property type="entry name" value="G3P_DH_NAD-dep"/>
</dbReference>
<dbReference type="InterPro" id="IPR006109">
    <property type="entry name" value="G3P_DH_NAD-dep_C"/>
</dbReference>
<dbReference type="InterPro" id="IPR011128">
    <property type="entry name" value="G3P_DH_NAD-dep_N"/>
</dbReference>
<dbReference type="InterPro" id="IPR036291">
    <property type="entry name" value="NAD(P)-bd_dom_sf"/>
</dbReference>
<dbReference type="NCBIfam" id="NF000940">
    <property type="entry name" value="PRK00094.1-2"/>
    <property type="match status" value="1"/>
</dbReference>
<dbReference type="NCBIfam" id="NF000942">
    <property type="entry name" value="PRK00094.1-4"/>
    <property type="match status" value="1"/>
</dbReference>
<dbReference type="PANTHER" id="PTHR11728">
    <property type="entry name" value="GLYCEROL-3-PHOSPHATE DEHYDROGENASE"/>
    <property type="match status" value="1"/>
</dbReference>
<dbReference type="PANTHER" id="PTHR11728:SF1">
    <property type="entry name" value="GLYCEROL-3-PHOSPHATE DEHYDROGENASE [NAD(+)] 2, CHLOROPLASTIC"/>
    <property type="match status" value="1"/>
</dbReference>
<dbReference type="Pfam" id="PF07479">
    <property type="entry name" value="NAD_Gly3P_dh_C"/>
    <property type="match status" value="1"/>
</dbReference>
<dbReference type="Pfam" id="PF01210">
    <property type="entry name" value="NAD_Gly3P_dh_N"/>
    <property type="match status" value="1"/>
</dbReference>
<dbReference type="PIRSF" id="PIRSF000114">
    <property type="entry name" value="Glycerol-3-P_dh"/>
    <property type="match status" value="1"/>
</dbReference>
<dbReference type="PRINTS" id="PR00077">
    <property type="entry name" value="GPDHDRGNASE"/>
</dbReference>
<dbReference type="SUPFAM" id="SSF48179">
    <property type="entry name" value="6-phosphogluconate dehydrogenase C-terminal domain-like"/>
    <property type="match status" value="1"/>
</dbReference>
<dbReference type="SUPFAM" id="SSF51735">
    <property type="entry name" value="NAD(P)-binding Rossmann-fold domains"/>
    <property type="match status" value="1"/>
</dbReference>
<dbReference type="PROSITE" id="PS00957">
    <property type="entry name" value="NAD_G3PDH"/>
    <property type="match status" value="1"/>
</dbReference>
<sequence>MAGIASTVAVMGAGAWGTALAKVLADAGGEVTLWARRAEVADQINTTRYNPDYLPGALLPPSIHATADAEEALGGASTVLLGVPAQTMRANLERWAPLLPEGATLVSLAKGIELGTLMRMSQVIISVTGAEPAQVAVISGPNLASEIAECQPAATVVACSDSGRAVALQRALNSGYFRPYTNADVVGTEIGGACKNIIALACGMAVGIGLGENTAAAIITRGLAEIIRLGTALGANGATLAGLAGVGDLVATCTSPRSRNRSFGERLGRGETLQSAGKACHVVEGVTSCESVLALASSYDVEMPLTDAVHRVCHKGLSVDEAITLLLGRRTKPE</sequence>
<accession>P59961</accession>
<accession>A0A1R3Y2S9</accession>
<accession>X2BM95</accession>
<protein>
    <recommendedName>
        <fullName evidence="1">Glycerol-3-phosphate dehydrogenase [NAD(P)+] 2</fullName>
        <ecNumber evidence="1">1.1.1.94</ecNumber>
    </recommendedName>
    <alternativeName>
        <fullName evidence="1">NAD(P)(+)-dependent glycerol-3-phosphate dehydrogenase 2</fullName>
    </alternativeName>
    <alternativeName>
        <fullName evidence="1">NAD(P)H-dependent dihydroxyacetone-phosphate reductase 2</fullName>
    </alternativeName>
</protein>
<reference key="1">
    <citation type="journal article" date="2003" name="Proc. Natl. Acad. Sci. U.S.A.">
        <title>The complete genome sequence of Mycobacterium bovis.</title>
        <authorList>
            <person name="Garnier T."/>
            <person name="Eiglmeier K."/>
            <person name="Camus J.-C."/>
            <person name="Medina N."/>
            <person name="Mansoor H."/>
            <person name="Pryor M."/>
            <person name="Duthoy S."/>
            <person name="Grondin S."/>
            <person name="Lacroix C."/>
            <person name="Monsempe C."/>
            <person name="Simon S."/>
            <person name="Harris B."/>
            <person name="Atkin R."/>
            <person name="Doggett J."/>
            <person name="Mayes R."/>
            <person name="Keating L."/>
            <person name="Wheeler P.R."/>
            <person name="Parkhill J."/>
            <person name="Barrell B.G."/>
            <person name="Cole S.T."/>
            <person name="Gordon S.V."/>
            <person name="Hewinson R.G."/>
        </authorList>
    </citation>
    <scope>NUCLEOTIDE SEQUENCE [LARGE SCALE GENOMIC DNA]</scope>
    <source>
        <strain>ATCC BAA-935 / AF2122/97</strain>
    </source>
</reference>
<reference key="2">
    <citation type="journal article" date="2017" name="Genome Announc.">
        <title>Updated reference genome sequence and annotation of Mycobacterium bovis AF2122/97.</title>
        <authorList>
            <person name="Malone K.M."/>
            <person name="Farrell D."/>
            <person name="Stuber T.P."/>
            <person name="Schubert O.T."/>
            <person name="Aebersold R."/>
            <person name="Robbe-Austerman S."/>
            <person name="Gordon S.V."/>
        </authorList>
    </citation>
    <scope>NUCLEOTIDE SEQUENCE [LARGE SCALE GENOMIC DNA]</scope>
    <scope>GENOME REANNOTATION</scope>
    <source>
        <strain>ATCC BAA-935 / AF2122/97</strain>
    </source>
</reference>
<keyword id="KW-0963">Cytoplasm</keyword>
<keyword id="KW-0444">Lipid biosynthesis</keyword>
<keyword id="KW-0443">Lipid metabolism</keyword>
<keyword id="KW-0520">NAD</keyword>
<keyword id="KW-0521">NADP</keyword>
<keyword id="KW-0547">Nucleotide-binding</keyword>
<keyword id="KW-0560">Oxidoreductase</keyword>
<keyword id="KW-0594">Phospholipid biosynthesis</keyword>
<keyword id="KW-1208">Phospholipid metabolism</keyword>
<keyword id="KW-1185">Reference proteome</keyword>
<organism>
    <name type="scientific">Mycobacterium bovis (strain ATCC BAA-935 / AF2122/97)</name>
    <dbReference type="NCBI Taxonomy" id="233413"/>
    <lineage>
        <taxon>Bacteria</taxon>
        <taxon>Bacillati</taxon>
        <taxon>Actinomycetota</taxon>
        <taxon>Actinomycetes</taxon>
        <taxon>Mycobacteriales</taxon>
        <taxon>Mycobacteriaceae</taxon>
        <taxon>Mycobacterium</taxon>
        <taxon>Mycobacterium tuberculosis complex</taxon>
    </lineage>
</organism>
<comment type="function">
    <text evidence="1">Catalyzes the reduction of the glycolytic intermediate dihydroxyacetone phosphate (DHAP) to sn-glycerol 3-phosphate (G3P), the key precursor for phospholipid synthesis.</text>
</comment>
<comment type="catalytic activity">
    <reaction evidence="1">
        <text>sn-glycerol 3-phosphate + NAD(+) = dihydroxyacetone phosphate + NADH + H(+)</text>
        <dbReference type="Rhea" id="RHEA:11092"/>
        <dbReference type="ChEBI" id="CHEBI:15378"/>
        <dbReference type="ChEBI" id="CHEBI:57540"/>
        <dbReference type="ChEBI" id="CHEBI:57597"/>
        <dbReference type="ChEBI" id="CHEBI:57642"/>
        <dbReference type="ChEBI" id="CHEBI:57945"/>
        <dbReference type="EC" id="1.1.1.94"/>
    </reaction>
    <physiologicalReaction direction="right-to-left" evidence="1">
        <dbReference type="Rhea" id="RHEA:11094"/>
    </physiologicalReaction>
</comment>
<comment type="catalytic activity">
    <reaction evidence="1">
        <text>sn-glycerol 3-phosphate + NADP(+) = dihydroxyacetone phosphate + NADPH + H(+)</text>
        <dbReference type="Rhea" id="RHEA:11096"/>
        <dbReference type="ChEBI" id="CHEBI:15378"/>
        <dbReference type="ChEBI" id="CHEBI:57597"/>
        <dbReference type="ChEBI" id="CHEBI:57642"/>
        <dbReference type="ChEBI" id="CHEBI:57783"/>
        <dbReference type="ChEBI" id="CHEBI:58349"/>
        <dbReference type="EC" id="1.1.1.94"/>
    </reaction>
    <physiologicalReaction direction="right-to-left" evidence="1">
        <dbReference type="Rhea" id="RHEA:11098"/>
    </physiologicalReaction>
</comment>
<comment type="pathway">
    <text evidence="1">Membrane lipid metabolism; glycerophospholipid metabolism.</text>
</comment>
<comment type="subcellular location">
    <subcellularLocation>
        <location evidence="1">Cytoplasm</location>
    </subcellularLocation>
</comment>
<comment type="similarity">
    <text evidence="1">Belongs to the NAD-dependent glycerol-3-phosphate dehydrogenase family.</text>
</comment>
<feature type="chain" id="PRO_0000137989" description="Glycerol-3-phosphate dehydrogenase [NAD(P)+] 2">
    <location>
        <begin position="1"/>
        <end position="334"/>
    </location>
</feature>
<feature type="active site" description="Proton acceptor" evidence="1">
    <location>
        <position position="195"/>
    </location>
</feature>
<feature type="binding site" evidence="1">
    <location>
        <position position="16"/>
    </location>
    <ligand>
        <name>NADPH</name>
        <dbReference type="ChEBI" id="CHEBI:57783"/>
    </ligand>
</feature>
<feature type="binding site" evidence="1">
    <location>
        <position position="36"/>
    </location>
    <ligand>
        <name>NADPH</name>
        <dbReference type="ChEBI" id="CHEBI:57783"/>
    </ligand>
</feature>
<feature type="binding site" evidence="1">
    <location>
        <position position="37"/>
    </location>
    <ligand>
        <name>NADPH</name>
        <dbReference type="ChEBI" id="CHEBI:57783"/>
    </ligand>
</feature>
<feature type="binding site" evidence="1">
    <location>
        <position position="110"/>
    </location>
    <ligand>
        <name>NADPH</name>
        <dbReference type="ChEBI" id="CHEBI:57783"/>
    </ligand>
</feature>
<feature type="binding site" evidence="1">
    <location>
        <position position="110"/>
    </location>
    <ligand>
        <name>sn-glycerol 3-phosphate</name>
        <dbReference type="ChEBI" id="CHEBI:57597"/>
    </ligand>
</feature>
<feature type="binding site" evidence="1">
    <location>
        <position position="140"/>
    </location>
    <ligand>
        <name>sn-glycerol 3-phosphate</name>
        <dbReference type="ChEBI" id="CHEBI:57597"/>
    </ligand>
</feature>
<feature type="binding site" evidence="1">
    <location>
        <position position="144"/>
    </location>
    <ligand>
        <name>NADPH</name>
        <dbReference type="ChEBI" id="CHEBI:57783"/>
    </ligand>
</feature>
<feature type="binding site" evidence="1">
    <location>
        <position position="195"/>
    </location>
    <ligand>
        <name>sn-glycerol 3-phosphate</name>
        <dbReference type="ChEBI" id="CHEBI:57597"/>
    </ligand>
</feature>
<feature type="binding site" evidence="1">
    <location>
        <position position="248"/>
    </location>
    <ligand>
        <name>sn-glycerol 3-phosphate</name>
        <dbReference type="ChEBI" id="CHEBI:57597"/>
    </ligand>
</feature>
<feature type="binding site" evidence="1">
    <location>
        <position position="258"/>
    </location>
    <ligand>
        <name>sn-glycerol 3-phosphate</name>
        <dbReference type="ChEBI" id="CHEBI:57597"/>
    </ligand>
</feature>
<feature type="binding site" evidence="1">
    <location>
        <position position="259"/>
    </location>
    <ligand>
        <name>NADPH</name>
        <dbReference type="ChEBI" id="CHEBI:57783"/>
    </ligand>
</feature>
<feature type="binding site" evidence="1">
    <location>
        <position position="259"/>
    </location>
    <ligand>
        <name>sn-glycerol 3-phosphate</name>
        <dbReference type="ChEBI" id="CHEBI:57597"/>
    </ligand>
</feature>
<feature type="binding site" evidence="1">
    <location>
        <position position="260"/>
    </location>
    <ligand>
        <name>sn-glycerol 3-phosphate</name>
        <dbReference type="ChEBI" id="CHEBI:57597"/>
    </ligand>
</feature>
<feature type="binding site" evidence="1">
    <location>
        <position position="282"/>
    </location>
    <ligand>
        <name>NADPH</name>
        <dbReference type="ChEBI" id="CHEBI:57783"/>
    </ligand>
</feature>
<feature type="binding site" evidence="1">
    <location>
        <position position="284"/>
    </location>
    <ligand>
        <name>NADPH</name>
        <dbReference type="ChEBI" id="CHEBI:57783"/>
    </ligand>
</feature>
<evidence type="ECO:0000255" key="1">
    <source>
        <dbReference type="HAMAP-Rule" id="MF_00394"/>
    </source>
</evidence>